<sequence length="642" mass="71127">MAEEAAPSESRAAGRLSLELCAEALPGRREEVGHEDTASHRRPRADPRRWASGLLLLLWLLEAPLLLGVRAQAAGQVSGPGQQAPPPPQPQQSGQQYNGERGISIPDHGYCQPISIPLCTDIAYNQTIMPNLLGHTNQEDAGLEVHQFYPLVKVQCSAELKFFLCSMYAPVCTVLEQALPPCRSLCERARQGCEALMNKFGFQWPDTLKCEKFPVHGAGELCVGQNTSDKGTPTPSLLPEFWTSNPQHGGGGYRGGYPGGAGTVERGKFSCPRALRVPSYLNYHFLGEKDCGAPCEPTKVYGLMYFGPEELRFSRTWIGIWSVLCCASTLFTVLTYLVDMRRFSYPERPIIFLSGCYTAVAVAYIAGFLLEDRVVCNDKFAEDGARTVAQGTKKEGCTILFMMLYFFSMASSIWWVILSLTWFLAAGMKWGHEAIEANSQYFHLAAWAVPAIKTITILALGQVDGDVLSGVCFVGLNNVDALRGFVLAPLFVYLFIGTSFLLAGFVSLFRIRTIMKHDGTKTEKLEKLMVRIGVFSVLYTVPATIVIACYFYEQAFRDQWERSWVAQSCKSYAIPCPHLQGGGGVPPHPPMSPDFTVFMIKYLMTLIVGITSGFWIWSGKTLNSWRKFYTRLTNSKQGETTV</sequence>
<organism>
    <name type="scientific">Mus musculus</name>
    <name type="common">Mouse</name>
    <dbReference type="NCBI Taxonomy" id="10090"/>
    <lineage>
        <taxon>Eukaryota</taxon>
        <taxon>Metazoa</taxon>
        <taxon>Chordata</taxon>
        <taxon>Craniata</taxon>
        <taxon>Vertebrata</taxon>
        <taxon>Euteleostomi</taxon>
        <taxon>Mammalia</taxon>
        <taxon>Eutheria</taxon>
        <taxon>Euarchontoglires</taxon>
        <taxon>Glires</taxon>
        <taxon>Rodentia</taxon>
        <taxon>Myomorpha</taxon>
        <taxon>Muroidea</taxon>
        <taxon>Muridae</taxon>
        <taxon>Murinae</taxon>
        <taxon>Mus</taxon>
        <taxon>Mus</taxon>
    </lineage>
</organism>
<gene>
    <name type="primary">Fzd1</name>
</gene>
<reference key="1">
    <citation type="journal article" date="2001" name="Matrix Biol.">
        <title>Expression of frizzled genes in mouse costochondral chondrocytes.</title>
        <authorList>
            <person name="Xu L."/>
            <person name="Tan L."/>
            <person name="Goldring M.B."/>
            <person name="Olsen B.R."/>
            <person name="Li Y."/>
        </authorList>
    </citation>
    <scope>NUCLEOTIDE SEQUENCE [MRNA]</scope>
    <source>
        <strain>C57BL/6J</strain>
        <tissue>Embryo</tissue>
    </source>
</reference>
<reference key="2">
    <citation type="journal article" date="2005" name="Science">
        <title>The transcriptional landscape of the mammalian genome.</title>
        <authorList>
            <person name="Carninci P."/>
            <person name="Kasukawa T."/>
            <person name="Katayama S."/>
            <person name="Gough J."/>
            <person name="Frith M.C."/>
            <person name="Maeda N."/>
            <person name="Oyama R."/>
            <person name="Ravasi T."/>
            <person name="Lenhard B."/>
            <person name="Wells C."/>
            <person name="Kodzius R."/>
            <person name="Shimokawa K."/>
            <person name="Bajic V.B."/>
            <person name="Brenner S.E."/>
            <person name="Batalov S."/>
            <person name="Forrest A.R."/>
            <person name="Zavolan M."/>
            <person name="Davis M.J."/>
            <person name="Wilming L.G."/>
            <person name="Aidinis V."/>
            <person name="Allen J.E."/>
            <person name="Ambesi-Impiombato A."/>
            <person name="Apweiler R."/>
            <person name="Aturaliya R.N."/>
            <person name="Bailey T.L."/>
            <person name="Bansal M."/>
            <person name="Baxter L."/>
            <person name="Beisel K.W."/>
            <person name="Bersano T."/>
            <person name="Bono H."/>
            <person name="Chalk A.M."/>
            <person name="Chiu K.P."/>
            <person name="Choudhary V."/>
            <person name="Christoffels A."/>
            <person name="Clutterbuck D.R."/>
            <person name="Crowe M.L."/>
            <person name="Dalla E."/>
            <person name="Dalrymple B.P."/>
            <person name="de Bono B."/>
            <person name="Della Gatta G."/>
            <person name="di Bernardo D."/>
            <person name="Down T."/>
            <person name="Engstrom P."/>
            <person name="Fagiolini M."/>
            <person name="Faulkner G."/>
            <person name="Fletcher C.F."/>
            <person name="Fukushima T."/>
            <person name="Furuno M."/>
            <person name="Futaki S."/>
            <person name="Gariboldi M."/>
            <person name="Georgii-Hemming P."/>
            <person name="Gingeras T.R."/>
            <person name="Gojobori T."/>
            <person name="Green R.E."/>
            <person name="Gustincich S."/>
            <person name="Harbers M."/>
            <person name="Hayashi Y."/>
            <person name="Hensch T.K."/>
            <person name="Hirokawa N."/>
            <person name="Hill D."/>
            <person name="Huminiecki L."/>
            <person name="Iacono M."/>
            <person name="Ikeo K."/>
            <person name="Iwama A."/>
            <person name="Ishikawa T."/>
            <person name="Jakt M."/>
            <person name="Kanapin A."/>
            <person name="Katoh M."/>
            <person name="Kawasawa Y."/>
            <person name="Kelso J."/>
            <person name="Kitamura H."/>
            <person name="Kitano H."/>
            <person name="Kollias G."/>
            <person name="Krishnan S.P."/>
            <person name="Kruger A."/>
            <person name="Kummerfeld S.K."/>
            <person name="Kurochkin I.V."/>
            <person name="Lareau L.F."/>
            <person name="Lazarevic D."/>
            <person name="Lipovich L."/>
            <person name="Liu J."/>
            <person name="Liuni S."/>
            <person name="McWilliam S."/>
            <person name="Madan Babu M."/>
            <person name="Madera M."/>
            <person name="Marchionni L."/>
            <person name="Matsuda H."/>
            <person name="Matsuzawa S."/>
            <person name="Miki H."/>
            <person name="Mignone F."/>
            <person name="Miyake S."/>
            <person name="Morris K."/>
            <person name="Mottagui-Tabar S."/>
            <person name="Mulder N."/>
            <person name="Nakano N."/>
            <person name="Nakauchi H."/>
            <person name="Ng P."/>
            <person name="Nilsson R."/>
            <person name="Nishiguchi S."/>
            <person name="Nishikawa S."/>
            <person name="Nori F."/>
            <person name="Ohara O."/>
            <person name="Okazaki Y."/>
            <person name="Orlando V."/>
            <person name="Pang K.C."/>
            <person name="Pavan W.J."/>
            <person name="Pavesi G."/>
            <person name="Pesole G."/>
            <person name="Petrovsky N."/>
            <person name="Piazza S."/>
            <person name="Reed J."/>
            <person name="Reid J.F."/>
            <person name="Ring B.Z."/>
            <person name="Ringwald M."/>
            <person name="Rost B."/>
            <person name="Ruan Y."/>
            <person name="Salzberg S.L."/>
            <person name="Sandelin A."/>
            <person name="Schneider C."/>
            <person name="Schoenbach C."/>
            <person name="Sekiguchi K."/>
            <person name="Semple C.A."/>
            <person name="Seno S."/>
            <person name="Sessa L."/>
            <person name="Sheng Y."/>
            <person name="Shibata Y."/>
            <person name="Shimada H."/>
            <person name="Shimada K."/>
            <person name="Silva D."/>
            <person name="Sinclair B."/>
            <person name="Sperling S."/>
            <person name="Stupka E."/>
            <person name="Sugiura K."/>
            <person name="Sultana R."/>
            <person name="Takenaka Y."/>
            <person name="Taki K."/>
            <person name="Tammoja K."/>
            <person name="Tan S.L."/>
            <person name="Tang S."/>
            <person name="Taylor M.S."/>
            <person name="Tegner J."/>
            <person name="Teichmann S.A."/>
            <person name="Ueda H.R."/>
            <person name="van Nimwegen E."/>
            <person name="Verardo R."/>
            <person name="Wei C.L."/>
            <person name="Yagi K."/>
            <person name="Yamanishi H."/>
            <person name="Zabarovsky E."/>
            <person name="Zhu S."/>
            <person name="Zimmer A."/>
            <person name="Hide W."/>
            <person name="Bult C."/>
            <person name="Grimmond S.M."/>
            <person name="Teasdale R.D."/>
            <person name="Liu E.T."/>
            <person name="Brusic V."/>
            <person name="Quackenbush J."/>
            <person name="Wahlestedt C."/>
            <person name="Mattick J.S."/>
            <person name="Hume D.A."/>
            <person name="Kai C."/>
            <person name="Sasaki D."/>
            <person name="Tomaru Y."/>
            <person name="Fukuda S."/>
            <person name="Kanamori-Katayama M."/>
            <person name="Suzuki M."/>
            <person name="Aoki J."/>
            <person name="Arakawa T."/>
            <person name="Iida J."/>
            <person name="Imamura K."/>
            <person name="Itoh M."/>
            <person name="Kato T."/>
            <person name="Kawaji H."/>
            <person name="Kawagashira N."/>
            <person name="Kawashima T."/>
            <person name="Kojima M."/>
            <person name="Kondo S."/>
            <person name="Konno H."/>
            <person name="Nakano K."/>
            <person name="Ninomiya N."/>
            <person name="Nishio T."/>
            <person name="Okada M."/>
            <person name="Plessy C."/>
            <person name="Shibata K."/>
            <person name="Shiraki T."/>
            <person name="Suzuki S."/>
            <person name="Tagami M."/>
            <person name="Waki K."/>
            <person name="Watahiki A."/>
            <person name="Okamura-Oho Y."/>
            <person name="Suzuki H."/>
            <person name="Kawai J."/>
            <person name="Hayashizaki Y."/>
        </authorList>
    </citation>
    <scope>NUCLEOTIDE SEQUENCE [LARGE SCALE MRNA]</scope>
    <source>
        <strain>C57BL/6J</strain>
        <tissue>Eye</tissue>
    </source>
</reference>
<reference key="3">
    <citation type="submission" date="2005-07" db="EMBL/GenBank/DDBJ databases">
        <authorList>
            <person name="Mural R.J."/>
            <person name="Adams M.D."/>
            <person name="Myers E.W."/>
            <person name="Smith H.O."/>
            <person name="Venter J.C."/>
        </authorList>
    </citation>
    <scope>NUCLEOTIDE SEQUENCE [LARGE SCALE GENOMIC DNA]</scope>
</reference>
<reference key="4">
    <citation type="journal article" date="2004" name="Genome Res.">
        <title>The status, quality, and expansion of the NIH full-length cDNA project: the Mammalian Gene Collection (MGC).</title>
        <authorList>
            <consortium name="The MGC Project Team"/>
        </authorList>
    </citation>
    <scope>NUCLEOTIDE SEQUENCE [LARGE SCALE MRNA]</scope>
    <source>
        <strain>C57BL/6J</strain>
        <tissue>Brain</tissue>
    </source>
</reference>
<reference key="5">
    <citation type="submission" date="1997-05" db="EMBL/GenBank/DDBJ databases">
        <authorList>
            <person name="Johnson M.A."/>
            <person name="Greenberg N.M."/>
        </authorList>
    </citation>
    <scope>NUCLEOTIDE SEQUENCE [MRNA] OF 302-376</scope>
    <source>
        <tissue>Prostate</tissue>
    </source>
</reference>
<reference key="6">
    <citation type="journal article" date="2005" name="Mol. Cell. Biol.">
        <title>Wnt7b activates canonical signaling in epithelial and vascular smooth muscle cells through interactions with Fzd1, Fzd10, and LRP5.</title>
        <authorList>
            <person name="Wang Z."/>
            <person name="Shu W."/>
            <person name="Lu M.M."/>
            <person name="Morrisey E.E."/>
        </authorList>
    </citation>
    <scope>INTERACTION WITH WNT7B</scope>
    <scope>FUNCTION</scope>
    <scope>SUBCELLULAR LOCATION</scope>
</reference>
<feature type="signal peptide" evidence="3">
    <location>
        <begin position="1"/>
        <end position="68"/>
    </location>
</feature>
<feature type="chain" id="PRO_0000012974" description="Frizzled-1">
    <location>
        <begin position="69"/>
        <end position="642"/>
    </location>
</feature>
<feature type="topological domain" description="Extracellular" evidence="3">
    <location>
        <begin position="69"/>
        <end position="317"/>
    </location>
</feature>
<feature type="transmembrane region" description="Helical; Name=1" evidence="3">
    <location>
        <begin position="318"/>
        <end position="338"/>
    </location>
</feature>
<feature type="topological domain" description="Cytoplasmic" evidence="3">
    <location>
        <begin position="339"/>
        <end position="349"/>
    </location>
</feature>
<feature type="transmembrane region" description="Helical; Name=2" evidence="3">
    <location>
        <begin position="350"/>
        <end position="370"/>
    </location>
</feature>
<feature type="topological domain" description="Extracellular" evidence="3">
    <location>
        <begin position="371"/>
        <end position="397"/>
    </location>
</feature>
<feature type="transmembrane region" description="Helical; Name=3" evidence="3">
    <location>
        <begin position="398"/>
        <end position="418"/>
    </location>
</feature>
<feature type="topological domain" description="Cytoplasmic" evidence="3">
    <location>
        <begin position="419"/>
        <end position="440"/>
    </location>
</feature>
<feature type="transmembrane region" description="Helical; Name=4" evidence="3">
    <location>
        <begin position="441"/>
        <end position="461"/>
    </location>
</feature>
<feature type="topological domain" description="Extracellular" evidence="3">
    <location>
        <begin position="462"/>
        <end position="484"/>
    </location>
</feature>
<feature type="transmembrane region" description="Helical; Name=5" evidence="3">
    <location>
        <begin position="485"/>
        <end position="505"/>
    </location>
</feature>
<feature type="topological domain" description="Cytoplasmic" evidence="3">
    <location>
        <begin position="506"/>
        <end position="531"/>
    </location>
</feature>
<feature type="transmembrane region" description="Helical; Name=6" evidence="3">
    <location>
        <begin position="532"/>
        <end position="552"/>
    </location>
</feature>
<feature type="topological domain" description="Extracellular" evidence="3">
    <location>
        <begin position="553"/>
        <end position="593"/>
    </location>
</feature>
<feature type="transmembrane region" description="Helical; Name=7" evidence="3">
    <location>
        <begin position="594"/>
        <end position="614"/>
    </location>
</feature>
<feature type="topological domain" description="Cytoplasmic" evidence="3">
    <location>
        <begin position="615"/>
        <end position="642"/>
    </location>
</feature>
<feature type="domain" description="FZ" evidence="4">
    <location>
        <begin position="106"/>
        <end position="225"/>
    </location>
</feature>
<feature type="region of interest" description="Disordered" evidence="5">
    <location>
        <begin position="26"/>
        <end position="45"/>
    </location>
</feature>
<feature type="region of interest" description="Disordered" evidence="5">
    <location>
        <begin position="76"/>
        <end position="99"/>
    </location>
</feature>
<feature type="short sequence motif" description="Lys-Thr-X-X-X-Trp motif, mediates interaction with the PDZ domain of Dvl family members" evidence="1">
    <location>
        <begin position="620"/>
        <end position="625"/>
    </location>
</feature>
<feature type="short sequence motif" description="PDZ-binding">
    <location>
        <begin position="640"/>
        <end position="642"/>
    </location>
</feature>
<feature type="glycosylation site" description="N-linked (GlcNAc...) asparagine" evidence="3">
    <location>
        <position position="125"/>
    </location>
</feature>
<feature type="glycosylation site" description="N-linked (GlcNAc...) asparagine" evidence="3">
    <location>
        <position position="226"/>
    </location>
</feature>
<feature type="disulfide bond" evidence="4">
    <location>
        <begin position="111"/>
        <end position="172"/>
    </location>
</feature>
<feature type="disulfide bond" evidence="4">
    <location>
        <begin position="119"/>
        <end position="165"/>
    </location>
</feature>
<feature type="disulfide bond" evidence="4">
    <location>
        <begin position="156"/>
        <end position="193"/>
    </location>
</feature>
<feature type="disulfide bond" evidence="4">
    <location>
        <begin position="182"/>
        <end position="222"/>
    </location>
</feature>
<feature type="disulfide bond" evidence="4">
    <location>
        <begin position="186"/>
        <end position="210"/>
    </location>
</feature>
<feature type="sequence conflict" description="In Ref. 1; AAC12873." evidence="7" ref="1">
    <original>I</original>
    <variation>M</variation>
    <location>
        <position position="122"/>
    </location>
</feature>
<feature type="sequence conflict" description="In Ref. 1; AAC12873." evidence="7" ref="1">
    <original>P</original>
    <variation>G</variation>
    <location>
        <position position="246"/>
    </location>
</feature>
<feature type="sequence conflict" description="In Ref. 1; AAC12873." evidence="7" ref="1">
    <original>R</original>
    <variation>P</variation>
    <location>
        <position position="341"/>
    </location>
</feature>
<feature type="sequence conflict" description="In Ref. 1; AAC12873." evidence="7" ref="1">
    <original>F</original>
    <variation>S</variation>
    <location>
        <position position="352"/>
    </location>
</feature>
<feature type="sequence conflict" description="In Ref. 1; AAC12873." evidence="7" ref="1">
    <original>K</original>
    <variation>N</variation>
    <location>
        <position position="393"/>
    </location>
</feature>
<feature type="sequence conflict" description="In Ref. 1; AAC12873." evidence="7" ref="1">
    <original>V</original>
    <variation>L</variation>
    <location>
        <position position="474"/>
    </location>
</feature>
<feature type="sequence conflict" description="In Ref. 1; AAC12873." evidence="7" ref="1">
    <original>W</original>
    <variation>R</variation>
    <location>
        <position position="615"/>
    </location>
</feature>
<dbReference type="EMBL" id="AF054623">
    <property type="protein sequence ID" value="AAC12873.2"/>
    <property type="molecule type" value="mRNA"/>
</dbReference>
<dbReference type="EMBL" id="AK143101">
    <property type="protein sequence ID" value="BAE25269.1"/>
    <property type="molecule type" value="mRNA"/>
</dbReference>
<dbReference type="EMBL" id="CH466600">
    <property type="protein sequence ID" value="EDL14633.1"/>
    <property type="molecule type" value="Genomic_DNA"/>
</dbReference>
<dbReference type="EMBL" id="BC053010">
    <property type="protein sequence ID" value="AAH53010.1"/>
    <property type="molecule type" value="mRNA"/>
</dbReference>
<dbReference type="EMBL" id="AF005202">
    <property type="protein sequence ID" value="AAC01952.1"/>
    <property type="molecule type" value="mRNA"/>
</dbReference>
<dbReference type="CCDS" id="CCDS19072.1"/>
<dbReference type="RefSeq" id="NP_067432.2">
    <property type="nucleotide sequence ID" value="NM_021457.3"/>
</dbReference>
<dbReference type="SMR" id="O70421"/>
<dbReference type="BioGRID" id="199775">
    <property type="interactions" value="3"/>
</dbReference>
<dbReference type="FunCoup" id="O70421">
    <property type="interactions" value="857"/>
</dbReference>
<dbReference type="IntAct" id="O70421">
    <property type="interactions" value="5"/>
</dbReference>
<dbReference type="MINT" id="O70421"/>
<dbReference type="STRING" id="10090.ENSMUSP00000058629"/>
<dbReference type="ChEMBL" id="CHEMBL4879419"/>
<dbReference type="GlyCosmos" id="O70421">
    <property type="glycosylation" value="2 sites, No reported glycans"/>
</dbReference>
<dbReference type="GlyGen" id="O70421">
    <property type="glycosylation" value="3 sites, 1 N-linked glycan (1 site)"/>
</dbReference>
<dbReference type="iPTMnet" id="O70421"/>
<dbReference type="PhosphoSitePlus" id="O70421"/>
<dbReference type="PaxDb" id="10090-ENSMUSP00000058629"/>
<dbReference type="PeptideAtlas" id="O70421"/>
<dbReference type="ProteomicsDB" id="273399"/>
<dbReference type="Pumba" id="O70421"/>
<dbReference type="Antibodypedia" id="4574">
    <property type="antibodies" value="458 antibodies from 36 providers"/>
</dbReference>
<dbReference type="DNASU" id="14362"/>
<dbReference type="Ensembl" id="ENSMUST00000054294.7">
    <property type="protein sequence ID" value="ENSMUSP00000058629.5"/>
    <property type="gene ID" value="ENSMUSG00000044674.7"/>
</dbReference>
<dbReference type="GeneID" id="14362"/>
<dbReference type="KEGG" id="mmu:14362"/>
<dbReference type="UCSC" id="uc008wig.2">
    <property type="organism name" value="mouse"/>
</dbReference>
<dbReference type="AGR" id="MGI:1196625"/>
<dbReference type="CTD" id="8321"/>
<dbReference type="MGI" id="MGI:1196625">
    <property type="gene designation" value="Fzd1"/>
</dbReference>
<dbReference type="VEuPathDB" id="HostDB:ENSMUSG00000044674"/>
<dbReference type="eggNOG" id="KOG3577">
    <property type="taxonomic scope" value="Eukaryota"/>
</dbReference>
<dbReference type="GeneTree" id="ENSGT00940000162584"/>
<dbReference type="HOGENOM" id="CLU_007873_2_1_1"/>
<dbReference type="InParanoid" id="O70421"/>
<dbReference type="OMA" id="VPDHGYC"/>
<dbReference type="OrthoDB" id="10053709at2759"/>
<dbReference type="PhylomeDB" id="O70421"/>
<dbReference type="TreeFam" id="TF317907"/>
<dbReference type="Reactome" id="R-MMU-4086400">
    <property type="pathway name" value="PCP/CE pathway"/>
</dbReference>
<dbReference type="Reactome" id="R-MMU-4608870">
    <property type="pathway name" value="Asymmetric localization of PCP proteins"/>
</dbReference>
<dbReference type="Reactome" id="R-MMU-4641262">
    <property type="pathway name" value="Disassembly of the destruction complex and recruitment of AXIN to the membrane"/>
</dbReference>
<dbReference type="BioGRID-ORCS" id="14362">
    <property type="hits" value="3 hits in 76 CRISPR screens"/>
</dbReference>
<dbReference type="ChiTaRS" id="Fzd1">
    <property type="organism name" value="mouse"/>
</dbReference>
<dbReference type="PRO" id="PR:O70421"/>
<dbReference type="Proteomes" id="UP000000589">
    <property type="component" value="Chromosome 5"/>
</dbReference>
<dbReference type="RNAct" id="O70421">
    <property type="molecule type" value="protein"/>
</dbReference>
<dbReference type="Bgee" id="ENSMUSG00000044674">
    <property type="expression patterns" value="Expressed in gastrula and 238 other cell types or tissues"/>
</dbReference>
<dbReference type="GO" id="GO:0009986">
    <property type="term" value="C:cell surface"/>
    <property type="evidence" value="ECO:0007669"/>
    <property type="project" value="Ensembl"/>
</dbReference>
<dbReference type="GO" id="GO:0005886">
    <property type="term" value="C:plasma membrane"/>
    <property type="evidence" value="ECO:0007669"/>
    <property type="project" value="UniProtKB-SubCell"/>
</dbReference>
<dbReference type="GO" id="GO:0005109">
    <property type="term" value="F:frizzled binding"/>
    <property type="evidence" value="ECO:0007669"/>
    <property type="project" value="Ensembl"/>
</dbReference>
<dbReference type="GO" id="GO:0004930">
    <property type="term" value="F:G protein-coupled receptor activity"/>
    <property type="evidence" value="ECO:0007669"/>
    <property type="project" value="UniProtKB-KW"/>
</dbReference>
<dbReference type="GO" id="GO:0030165">
    <property type="term" value="F:PDZ domain binding"/>
    <property type="evidence" value="ECO:0007669"/>
    <property type="project" value="Ensembl"/>
</dbReference>
<dbReference type="GO" id="GO:0042813">
    <property type="term" value="F:Wnt receptor activity"/>
    <property type="evidence" value="ECO:0000250"/>
    <property type="project" value="ParkinsonsUK-UCL"/>
</dbReference>
<dbReference type="GO" id="GO:0017147">
    <property type="term" value="F:Wnt-protein binding"/>
    <property type="evidence" value="ECO:0000353"/>
    <property type="project" value="MGI"/>
</dbReference>
<dbReference type="GO" id="GO:0036520">
    <property type="term" value="P:astrocyte-dopaminergic neuron signaling"/>
    <property type="evidence" value="ECO:0000315"/>
    <property type="project" value="ARUK-UCL"/>
</dbReference>
<dbReference type="GO" id="GO:0035425">
    <property type="term" value="P:autocrine signaling"/>
    <property type="evidence" value="ECO:0007669"/>
    <property type="project" value="Ensembl"/>
</dbReference>
<dbReference type="GO" id="GO:0060070">
    <property type="term" value="P:canonical Wnt signaling pathway"/>
    <property type="evidence" value="ECO:0000315"/>
    <property type="project" value="ARUK-UCL"/>
</dbReference>
<dbReference type="GO" id="GO:0007267">
    <property type="term" value="P:cell-cell signaling"/>
    <property type="evidence" value="ECO:0000314"/>
    <property type="project" value="MGI"/>
</dbReference>
<dbReference type="GO" id="GO:0045446">
    <property type="term" value="P:endothelial cell differentiation"/>
    <property type="evidence" value="ECO:0000314"/>
    <property type="project" value="MGI"/>
</dbReference>
<dbReference type="GO" id="GO:0060022">
    <property type="term" value="P:hard palate development"/>
    <property type="evidence" value="ECO:0000316"/>
    <property type="project" value="MGI"/>
</dbReference>
<dbReference type="GO" id="GO:0003149">
    <property type="term" value="P:membranous septum morphogenesis"/>
    <property type="evidence" value="ECO:0000316"/>
    <property type="project" value="MGI"/>
</dbReference>
<dbReference type="GO" id="GO:0003150">
    <property type="term" value="P:muscular septum morphogenesis"/>
    <property type="evidence" value="ECO:0000316"/>
    <property type="project" value="MGI"/>
</dbReference>
<dbReference type="GO" id="GO:0030514">
    <property type="term" value="P:negative regulation of BMP signaling pathway"/>
    <property type="evidence" value="ECO:0000314"/>
    <property type="project" value="MGI"/>
</dbReference>
<dbReference type="GO" id="GO:0090090">
    <property type="term" value="P:negative regulation of canonical Wnt signaling pathway"/>
    <property type="evidence" value="ECO:0000314"/>
    <property type="project" value="MGI"/>
</dbReference>
<dbReference type="GO" id="GO:0045892">
    <property type="term" value="P:negative regulation of DNA-templated transcription"/>
    <property type="evidence" value="ECO:0000315"/>
    <property type="project" value="MGI"/>
</dbReference>
<dbReference type="GO" id="GO:1903377">
    <property type="term" value="P:negative regulation of oxidative stress-induced neuron intrinsic apoptotic signaling pathway"/>
    <property type="evidence" value="ECO:0000315"/>
    <property type="project" value="ParkinsonsUK-UCL"/>
</dbReference>
<dbReference type="GO" id="GO:0003151">
    <property type="term" value="P:outflow tract morphogenesis"/>
    <property type="evidence" value="ECO:0000316"/>
    <property type="project" value="MGI"/>
</dbReference>
<dbReference type="GO" id="GO:0045669">
    <property type="term" value="P:positive regulation of osteoblast differentiation"/>
    <property type="evidence" value="ECO:0007669"/>
    <property type="project" value="Ensembl"/>
</dbReference>
<dbReference type="GO" id="GO:0045944">
    <property type="term" value="P:positive regulation of transcription by RNA polymerase II"/>
    <property type="evidence" value="ECO:0007669"/>
    <property type="project" value="Ensembl"/>
</dbReference>
<dbReference type="GO" id="GO:2000739">
    <property type="term" value="P:regulation of mesenchymal stem cell differentiation"/>
    <property type="evidence" value="ECO:0007669"/>
    <property type="project" value="Ensembl"/>
</dbReference>
<dbReference type="GO" id="GO:1905606">
    <property type="term" value="P:regulation of presynapse assembly"/>
    <property type="evidence" value="ECO:0000314"/>
    <property type="project" value="SynGO"/>
</dbReference>
<dbReference type="GO" id="GO:0009410">
    <property type="term" value="P:response to xenobiotic stimulus"/>
    <property type="evidence" value="ECO:0007669"/>
    <property type="project" value="Ensembl"/>
</dbReference>
<dbReference type="GO" id="GO:0060412">
    <property type="term" value="P:ventricular septum morphogenesis"/>
    <property type="evidence" value="ECO:0000316"/>
    <property type="project" value="MGI"/>
</dbReference>
<dbReference type="CDD" id="cd15247">
    <property type="entry name" value="7tmF_FZD1"/>
    <property type="match status" value="1"/>
</dbReference>
<dbReference type="CDD" id="cd07465">
    <property type="entry name" value="CRD_FZ1"/>
    <property type="match status" value="1"/>
</dbReference>
<dbReference type="FunFam" id="1.10.2000.10:FF:000003">
    <property type="entry name" value="Frizzled class receptor 2"/>
    <property type="match status" value="1"/>
</dbReference>
<dbReference type="FunFam" id="1.20.1070.10:FF:000029">
    <property type="entry name" value="Frizzled class receptor 2"/>
    <property type="match status" value="1"/>
</dbReference>
<dbReference type="Gene3D" id="1.10.2000.10">
    <property type="entry name" value="Frizzled cysteine-rich domain"/>
    <property type="match status" value="1"/>
</dbReference>
<dbReference type="Gene3D" id="1.20.1070.10">
    <property type="entry name" value="Rhodopsin 7-helix transmembrane proteins"/>
    <property type="match status" value="1"/>
</dbReference>
<dbReference type="InterPro" id="IPR015526">
    <property type="entry name" value="Frizzled/SFRP"/>
</dbReference>
<dbReference type="InterPro" id="IPR000539">
    <property type="entry name" value="Frizzled/Smoothened_7TM"/>
</dbReference>
<dbReference type="InterPro" id="IPR020067">
    <property type="entry name" value="Frizzled_dom"/>
</dbReference>
<dbReference type="InterPro" id="IPR036790">
    <property type="entry name" value="Frizzled_dom_sf"/>
</dbReference>
<dbReference type="InterPro" id="IPR017981">
    <property type="entry name" value="GPCR_2-like_7TM"/>
</dbReference>
<dbReference type="PANTHER" id="PTHR11309">
    <property type="entry name" value="FRIZZLED"/>
    <property type="match status" value="1"/>
</dbReference>
<dbReference type="PANTHER" id="PTHR11309:SF81">
    <property type="entry name" value="FRIZZLED-1"/>
    <property type="match status" value="1"/>
</dbReference>
<dbReference type="Pfam" id="PF01534">
    <property type="entry name" value="Frizzled"/>
    <property type="match status" value="1"/>
</dbReference>
<dbReference type="Pfam" id="PF01392">
    <property type="entry name" value="Fz"/>
    <property type="match status" value="1"/>
</dbReference>
<dbReference type="PRINTS" id="PR00489">
    <property type="entry name" value="FRIZZLED"/>
</dbReference>
<dbReference type="SMART" id="SM00063">
    <property type="entry name" value="FRI"/>
    <property type="match status" value="1"/>
</dbReference>
<dbReference type="SMART" id="SM01330">
    <property type="entry name" value="Frizzled"/>
    <property type="match status" value="1"/>
</dbReference>
<dbReference type="SUPFAM" id="SSF63501">
    <property type="entry name" value="Frizzled cysteine-rich domain"/>
    <property type="match status" value="1"/>
</dbReference>
<dbReference type="PROSITE" id="PS50038">
    <property type="entry name" value="FZ"/>
    <property type="match status" value="1"/>
</dbReference>
<dbReference type="PROSITE" id="PS50261">
    <property type="entry name" value="G_PROTEIN_RECEP_F2_4"/>
    <property type="match status" value="1"/>
</dbReference>
<keyword id="KW-1003">Cell membrane</keyword>
<keyword id="KW-0217">Developmental protein</keyword>
<keyword id="KW-1015">Disulfide bond</keyword>
<keyword id="KW-0297">G-protein coupled receptor</keyword>
<keyword id="KW-0325">Glycoprotein</keyword>
<keyword id="KW-0472">Membrane</keyword>
<keyword id="KW-0675">Receptor</keyword>
<keyword id="KW-1185">Reference proteome</keyword>
<keyword id="KW-0732">Signal</keyword>
<keyword id="KW-0807">Transducer</keyword>
<keyword id="KW-0812">Transmembrane</keyword>
<keyword id="KW-1133">Transmembrane helix</keyword>
<keyword id="KW-0832">Ubl conjugation</keyword>
<keyword id="KW-0879">Wnt signaling pathway</keyword>
<name>FZD1_MOUSE</name>
<evidence type="ECO:0000250" key="1"/>
<evidence type="ECO:0000250" key="2">
    <source>
        <dbReference type="UniProtKB" id="Q9UP38"/>
    </source>
</evidence>
<evidence type="ECO:0000255" key="3"/>
<evidence type="ECO:0000255" key="4">
    <source>
        <dbReference type="PROSITE-ProRule" id="PRU00090"/>
    </source>
</evidence>
<evidence type="ECO:0000256" key="5">
    <source>
        <dbReference type="SAM" id="MobiDB-lite"/>
    </source>
</evidence>
<evidence type="ECO:0000269" key="6">
    <source>
    </source>
</evidence>
<evidence type="ECO:0000305" key="7"/>
<accession>O70421</accession>
<accession>O08974</accession>
<accession>Q7TS82</accession>
<protein>
    <recommendedName>
        <fullName>Frizzled-1</fullName>
        <shortName>Fz-1</shortName>
        <shortName>mFz1</shortName>
    </recommendedName>
</protein>
<comment type="function">
    <text evidence="2 6 7">Receptor for Wnt proteins (PubMed:15923619). Activated by WNT7B (PubMed:15923619). Activated by WNT3A, WNT3, WNT1 and to a lesser extent WNT2, but apparently not by WNT4, WNT5A, WNT5B, WNT6, WNT7A or WNT7B (By similarity). Contradictory results showing activation by WNT7B have been described for mouse (PubMed:15923619). Functions in the canonical Wnt/beta-catenin signaling pathway (PubMed:15923619). The canonical Wnt/beta-catenin signaling pathway leads to the activation of disheveled proteins, inhibition of GSK-3 kinase, nuclear accumulation of beta-catenin and activation of Wnt target genes (PubMed:15923619). A second signaling pathway involving PKC and calcium fluxes has been seen for some family members, but it is not yet clear if it represents a distinct pathway or if it can be integrated in the canonical pathway, as PKC seems to be required for Wnt-mediated inactivation of GSK-3 kinase. Both pathways seem to involve interactions with G-proteins. May be involved in transduction and intercellular transmission of polarity information during tissue morphogenesis and/or in differentiated tissues (Probable).</text>
</comment>
<comment type="subunit">
    <text evidence="2 6">Interacts with MYOC (By similarity). Interacts with WNT7B (PubMed:15923619).</text>
</comment>
<comment type="subcellular location">
    <subcellularLocation>
        <location evidence="6">Cell membrane</location>
        <topology evidence="3">Multi-pass membrane protein</topology>
    </subcellularLocation>
</comment>
<comment type="tissue specificity">
    <text>Expressed in chondrocytes.</text>
</comment>
<comment type="domain">
    <text evidence="1">Lys-Thr-X-X-X-Trp motif interacts with the PDZ domain of Dvl (Disheveled) family members and is involved in the activation of the Wnt/beta-catenin signaling pathway.</text>
</comment>
<comment type="domain">
    <text evidence="1">The FZ domain is involved in binding with Wnt ligands.</text>
</comment>
<comment type="PTM">
    <text evidence="1">Ubiquitinated by ZNRF3, leading to its degradation by the proteasome.</text>
</comment>
<comment type="similarity">
    <text evidence="7">Belongs to the G-protein coupled receptor Fz/Smo family.</text>
</comment>
<comment type="caution">
    <text evidence="7">Activation by specific Wnt family members may depend on the cells used for the experiment. Contradictory results have been reported for activation by WNT7B in human and mouse.</text>
</comment>
<proteinExistence type="evidence at protein level"/>